<comment type="subcellular location">
    <subcellularLocation>
        <location evidence="1">Secreted</location>
    </subcellularLocation>
</comment>
<comment type="tissue specificity">
    <text evidence="3">Expressed specifically in the placenta. Highly expressed in invasive trophoblast cells lining the central placental vessel.</text>
</comment>
<comment type="developmental stage">
    <text evidence="3">Highest levels are observed from day 11 until parturition, with peak levels also on day 13.</text>
</comment>
<comment type="similarity">
    <text evidence="4">Belongs to the somatotropin/prolactin family.</text>
</comment>
<evidence type="ECO:0000250" key="1"/>
<evidence type="ECO:0000255" key="2"/>
<evidence type="ECO:0000269" key="3">
    <source>
    </source>
</evidence>
<evidence type="ECO:0000305" key="4"/>
<dbReference type="EMBL" id="AF226608">
    <property type="protein sequence ID" value="AAF89997.1"/>
    <property type="molecule type" value="mRNA"/>
</dbReference>
<dbReference type="EMBL" id="BC097296">
    <property type="protein sequence ID" value="AAH97296.1"/>
    <property type="molecule type" value="mRNA"/>
</dbReference>
<dbReference type="RefSeq" id="NP_446243.1">
    <property type="nucleotide sequence ID" value="NM_053791.2"/>
</dbReference>
<dbReference type="SMR" id="Q9JII3"/>
<dbReference type="STRING" id="10116.ENSRNOP00000022093"/>
<dbReference type="PhosphoSitePlus" id="Q9JII3"/>
<dbReference type="PaxDb" id="10116-ENSRNOP00000022093"/>
<dbReference type="Ensembl" id="ENSRNOT00000022093.5">
    <property type="protein sequence ID" value="ENSRNOP00000022093.4"/>
    <property type="gene ID" value="ENSRNOG00000016463.5"/>
</dbReference>
<dbReference type="GeneID" id="116474"/>
<dbReference type="KEGG" id="rno:116474"/>
<dbReference type="UCSC" id="RGD:620121">
    <property type="organism name" value="rat"/>
</dbReference>
<dbReference type="AGR" id="RGD:620121"/>
<dbReference type="CTD" id="56635"/>
<dbReference type="RGD" id="620121">
    <property type="gene designation" value="Prl2a1"/>
</dbReference>
<dbReference type="eggNOG" id="ENOG502QYU3">
    <property type="taxonomic scope" value="Eukaryota"/>
</dbReference>
<dbReference type="GeneTree" id="ENSGT00950000182818"/>
<dbReference type="HOGENOM" id="CLU_088274_0_1_1"/>
<dbReference type="InParanoid" id="Q9JII3"/>
<dbReference type="OMA" id="WREPLWH"/>
<dbReference type="OrthoDB" id="9599049at2759"/>
<dbReference type="PhylomeDB" id="Q9JII3"/>
<dbReference type="TreeFam" id="TF332592"/>
<dbReference type="PRO" id="PR:Q9JII3"/>
<dbReference type="Proteomes" id="UP000002494">
    <property type="component" value="Chromosome 17"/>
</dbReference>
<dbReference type="Bgee" id="ENSRNOG00000016463">
    <property type="expression patterns" value="Expressed in colon"/>
</dbReference>
<dbReference type="ExpressionAtlas" id="Q9JII3">
    <property type="expression patterns" value="baseline and differential"/>
</dbReference>
<dbReference type="GO" id="GO:0005615">
    <property type="term" value="C:extracellular space"/>
    <property type="evidence" value="ECO:0000318"/>
    <property type="project" value="GO_Central"/>
</dbReference>
<dbReference type="GO" id="GO:0005179">
    <property type="term" value="F:hormone activity"/>
    <property type="evidence" value="ECO:0000318"/>
    <property type="project" value="GO_Central"/>
</dbReference>
<dbReference type="GO" id="GO:0005148">
    <property type="term" value="F:prolactin receptor binding"/>
    <property type="evidence" value="ECO:0000318"/>
    <property type="project" value="GO_Central"/>
</dbReference>
<dbReference type="GO" id="GO:0007166">
    <property type="term" value="P:cell surface receptor signaling pathway"/>
    <property type="evidence" value="ECO:0000318"/>
    <property type="project" value="GO_Central"/>
</dbReference>
<dbReference type="GO" id="GO:0007565">
    <property type="term" value="P:female pregnancy"/>
    <property type="evidence" value="ECO:0000318"/>
    <property type="project" value="GO_Central"/>
</dbReference>
<dbReference type="GO" id="GO:0030879">
    <property type="term" value="P:mammary gland development"/>
    <property type="evidence" value="ECO:0000318"/>
    <property type="project" value="GO_Central"/>
</dbReference>
<dbReference type="GO" id="GO:1903489">
    <property type="term" value="P:positive regulation of lactation"/>
    <property type="evidence" value="ECO:0000318"/>
    <property type="project" value="GO_Central"/>
</dbReference>
<dbReference type="GO" id="GO:0046427">
    <property type="term" value="P:positive regulation of receptor signaling pathway via JAK-STAT"/>
    <property type="evidence" value="ECO:0000318"/>
    <property type="project" value="GO_Central"/>
</dbReference>
<dbReference type="GO" id="GO:0031667">
    <property type="term" value="P:response to nutrient levels"/>
    <property type="evidence" value="ECO:0000318"/>
    <property type="project" value="GO_Central"/>
</dbReference>
<dbReference type="CDD" id="cd10288">
    <property type="entry name" value="prolactin_like"/>
    <property type="match status" value="1"/>
</dbReference>
<dbReference type="FunFam" id="1.20.1250.10:FF:000047">
    <property type="entry name" value="Growth hormone d21"/>
    <property type="match status" value="1"/>
</dbReference>
<dbReference type="Gene3D" id="1.20.1250.10">
    <property type="match status" value="1"/>
</dbReference>
<dbReference type="InterPro" id="IPR009079">
    <property type="entry name" value="4_helix_cytokine-like_core"/>
</dbReference>
<dbReference type="InterPro" id="IPR001400">
    <property type="entry name" value="Somatotropin/Prolactin"/>
</dbReference>
<dbReference type="PANTHER" id="PTHR11417:SF12">
    <property type="entry name" value="PROLACTIN-2A1"/>
    <property type="match status" value="1"/>
</dbReference>
<dbReference type="PANTHER" id="PTHR11417">
    <property type="entry name" value="SOMATOTROPIN,PROLACTIN"/>
    <property type="match status" value="1"/>
</dbReference>
<dbReference type="Pfam" id="PF00103">
    <property type="entry name" value="Hormone_1"/>
    <property type="match status" value="1"/>
</dbReference>
<dbReference type="PRINTS" id="PR00836">
    <property type="entry name" value="SOMATOTROPIN"/>
</dbReference>
<dbReference type="SUPFAM" id="SSF47266">
    <property type="entry name" value="4-helical cytokines"/>
    <property type="match status" value="1"/>
</dbReference>
<accession>Q9JII3</accession>
<feature type="signal peptide" evidence="2">
    <location>
        <begin position="1"/>
        <end position="29"/>
    </location>
</feature>
<feature type="chain" id="PRO_0000045162" description="Prolactin-2A1">
    <location>
        <begin position="30"/>
        <end position="228"/>
    </location>
</feature>
<feature type="disulfide bond" evidence="1">
    <location>
        <begin position="87"/>
        <end position="203"/>
    </location>
</feature>
<feature type="disulfide bond" evidence="1">
    <location>
        <begin position="220"/>
        <end position="228"/>
    </location>
</feature>
<organism>
    <name type="scientific">Rattus norvegicus</name>
    <name type="common">Rat</name>
    <dbReference type="NCBI Taxonomy" id="10116"/>
    <lineage>
        <taxon>Eukaryota</taxon>
        <taxon>Metazoa</taxon>
        <taxon>Chordata</taxon>
        <taxon>Craniata</taxon>
        <taxon>Vertebrata</taxon>
        <taxon>Euteleostomi</taxon>
        <taxon>Mammalia</taxon>
        <taxon>Eutheria</taxon>
        <taxon>Euarchontoglires</taxon>
        <taxon>Glires</taxon>
        <taxon>Rodentia</taxon>
        <taxon>Myomorpha</taxon>
        <taxon>Muroidea</taxon>
        <taxon>Muridae</taxon>
        <taxon>Murinae</taxon>
        <taxon>Rattus</taxon>
    </lineage>
</organism>
<protein>
    <recommendedName>
        <fullName>Prolactin-2A1</fullName>
    </recommendedName>
    <alternativeName>
        <fullName>Placental prolactin-like protein M</fullName>
        <shortName>PLP-M</shortName>
        <shortName>PRL-like protein M</shortName>
    </alternativeName>
</protein>
<keyword id="KW-1015">Disulfide bond</keyword>
<keyword id="KW-0372">Hormone</keyword>
<keyword id="KW-1185">Reference proteome</keyword>
<keyword id="KW-0964">Secreted</keyword>
<keyword id="KW-0732">Signal</keyword>
<name>PR2A1_RAT</name>
<reference key="1">
    <citation type="journal article" date="2000" name="Biol. Reprod.">
        <title>Identification of three prolactin-related hormones as markers of invasive trophoblasts in the rat.</title>
        <authorList>
            <person name="Toft D.J."/>
            <person name="Linzer D.I.H."/>
        </authorList>
    </citation>
    <scope>NUCLEOTIDE SEQUENCE [MRNA]</scope>
    <scope>DEVELOPMENTAL STAGE</scope>
    <scope>TISSUE SPECIFICITY</scope>
</reference>
<reference key="2">
    <citation type="journal article" date="2004" name="Genome Res.">
        <title>The status, quality, and expansion of the NIH full-length cDNA project: the Mammalian Gene Collection (MGC).</title>
        <authorList>
            <consortium name="The MGC Project Team"/>
        </authorList>
    </citation>
    <scope>NUCLEOTIDE SEQUENCE [LARGE SCALE MRNA]</scope>
    <source>
        <tissue>Placenta</tissue>
    </source>
</reference>
<sequence length="228" mass="25709">MQLSITHPCCWTLRLLLVSNLLLWENVALVPTCLVRNGRCFASLEEMLERAVGLSEEISKQALQLFTEFDNQYAQSKQLINKNFKKCHTSSLELPKPSSTSVQTHPITLLKIASKLLSAWKVPLNDLVNNLPSLKDIHPNILSKAREIEAKSAGLLEGVKSILIQMQNGDTEDENYPGWSGLASLQSENEDDRLFAYYNMIRCEGRETQKVETALKMVKCKISNENNC</sequence>
<gene>
    <name type="primary">Prl2a1</name>
    <name type="synonym">Prlpm</name>
</gene>
<proteinExistence type="evidence at transcript level"/>